<accession>Q6GPH6</accession>
<accession>F5H1L8</accession>
<accession>Q8NE61</accession>
<sequence length="555" mass="63395">MNVDAEASMAVISLLFLAVMYVVHHPLMVSDRMDLDTLARSRQLEKRMSEEMRLLEMEFEERKRAAEQRQKAENFWTGDTSSDQLVLGKKDMGWPFQADGQEGPLGWMLGNLWNTGLFCLFLVFELLRQNMQHEPAFDSSSEEEEEEVRVVPVTSYNWLTDFPSQEALDSFYKHYVQNAIRDLPCTCEFVESFVDDLIEACRVLSRQEAHPQLEDCLGIGAAFEKWGTLHETQKFDILVPIVPPQGTMFVLEMRDPALGRRCGCVLVESECVCKREKLLGDVLCLVHHHRDPSAVLGKCSSSIKAALCTGFHLDVCKTVQWFRNMMGNAWALVAHKYDFKLSLPPSTTSCKLRLDYRSGRFLSIHLVLGVQREDTLVYLVSQAPDQEQLTSVDWPESFVACEHLFLKLVGRFAPENTCHLKCLQIILSLRQHQSLPHGASRPILTSYHFKTALMHLLLRLPLTDWAHNMLSQRLQDILWFLGRGLQQRSLHHFLIGNNFLPLTIPIPKTFRNAEPVNLFQHLVLNPKAHSQAVEEFQNLLTQVKTLPHAPLAAAP</sequence>
<protein>
    <recommendedName>
        <fullName>Inositol 1,4,5-trisphosphate receptor-interacting protein-like 1</fullName>
    </recommendedName>
</protein>
<reference key="1">
    <citation type="journal article" date="2005" name="Nature">
        <title>Generation and annotation of the DNA sequences of human chromosomes 2 and 4.</title>
        <authorList>
            <person name="Hillier L.W."/>
            <person name="Graves T.A."/>
            <person name="Fulton R.S."/>
            <person name="Fulton L.A."/>
            <person name="Pepin K.H."/>
            <person name="Minx P."/>
            <person name="Wagner-McPherson C."/>
            <person name="Layman D."/>
            <person name="Wylie K."/>
            <person name="Sekhon M."/>
            <person name="Becker M.C."/>
            <person name="Fewell G.A."/>
            <person name="Delehaunty K.D."/>
            <person name="Miner T.L."/>
            <person name="Nash W.E."/>
            <person name="Kremitzki C."/>
            <person name="Oddy L."/>
            <person name="Du H."/>
            <person name="Sun H."/>
            <person name="Bradshaw-Cordum H."/>
            <person name="Ali J."/>
            <person name="Carter J."/>
            <person name="Cordes M."/>
            <person name="Harris A."/>
            <person name="Isak A."/>
            <person name="van Brunt A."/>
            <person name="Nguyen C."/>
            <person name="Du F."/>
            <person name="Courtney L."/>
            <person name="Kalicki J."/>
            <person name="Ozersky P."/>
            <person name="Abbott S."/>
            <person name="Armstrong J."/>
            <person name="Belter E.A."/>
            <person name="Caruso L."/>
            <person name="Cedroni M."/>
            <person name="Cotton M."/>
            <person name="Davidson T."/>
            <person name="Desai A."/>
            <person name="Elliott G."/>
            <person name="Erb T."/>
            <person name="Fronick C."/>
            <person name="Gaige T."/>
            <person name="Haakenson W."/>
            <person name="Haglund K."/>
            <person name="Holmes A."/>
            <person name="Harkins R."/>
            <person name="Kim K."/>
            <person name="Kruchowski S.S."/>
            <person name="Strong C.M."/>
            <person name="Grewal N."/>
            <person name="Goyea E."/>
            <person name="Hou S."/>
            <person name="Levy A."/>
            <person name="Martinka S."/>
            <person name="Mead K."/>
            <person name="McLellan M.D."/>
            <person name="Meyer R."/>
            <person name="Randall-Maher J."/>
            <person name="Tomlinson C."/>
            <person name="Dauphin-Kohlberg S."/>
            <person name="Kozlowicz-Reilly A."/>
            <person name="Shah N."/>
            <person name="Swearengen-Shahid S."/>
            <person name="Snider J."/>
            <person name="Strong J.T."/>
            <person name="Thompson J."/>
            <person name="Yoakum M."/>
            <person name="Leonard S."/>
            <person name="Pearman C."/>
            <person name="Trani L."/>
            <person name="Radionenko M."/>
            <person name="Waligorski J.E."/>
            <person name="Wang C."/>
            <person name="Rock S.M."/>
            <person name="Tin-Wollam A.-M."/>
            <person name="Maupin R."/>
            <person name="Latreille P."/>
            <person name="Wendl M.C."/>
            <person name="Yang S.-P."/>
            <person name="Pohl C."/>
            <person name="Wallis J.W."/>
            <person name="Spieth J."/>
            <person name="Bieri T.A."/>
            <person name="Berkowicz N."/>
            <person name="Nelson J.O."/>
            <person name="Osborne J."/>
            <person name="Ding L."/>
            <person name="Meyer R."/>
            <person name="Sabo A."/>
            <person name="Shotland Y."/>
            <person name="Sinha P."/>
            <person name="Wohldmann P.E."/>
            <person name="Cook L.L."/>
            <person name="Hickenbotham M.T."/>
            <person name="Eldred J."/>
            <person name="Williams D."/>
            <person name="Jones T.A."/>
            <person name="She X."/>
            <person name="Ciccarelli F.D."/>
            <person name="Izaurralde E."/>
            <person name="Taylor J."/>
            <person name="Schmutz J."/>
            <person name="Myers R.M."/>
            <person name="Cox D.R."/>
            <person name="Huang X."/>
            <person name="McPherson J.D."/>
            <person name="Mardis E.R."/>
            <person name="Clifton S.W."/>
            <person name="Warren W.C."/>
            <person name="Chinwalla A.T."/>
            <person name="Eddy S.R."/>
            <person name="Marra M.A."/>
            <person name="Ovcharenko I."/>
            <person name="Furey T.S."/>
            <person name="Miller W."/>
            <person name="Eichler E.E."/>
            <person name="Bork P."/>
            <person name="Suyama M."/>
            <person name="Torrents D."/>
            <person name="Waterston R.H."/>
            <person name="Wilson R.K."/>
        </authorList>
    </citation>
    <scope>NUCLEOTIDE SEQUENCE [LARGE SCALE GENOMIC DNA]</scope>
</reference>
<reference key="2">
    <citation type="journal article" date="2004" name="Genome Res.">
        <title>The status, quality, and expansion of the NIH full-length cDNA project: the Mammalian Gene Collection (MGC).</title>
        <authorList>
            <consortium name="The MGC Project Team"/>
        </authorList>
    </citation>
    <scope>NUCLEOTIDE SEQUENCE [LARGE SCALE MRNA] (ISOFORMS 1 AND 2)</scope>
    <scope>VARIANT ARG-280</scope>
    <source>
        <tissue>Pancreas</tissue>
        <tissue>Testis</tissue>
    </source>
</reference>
<reference key="3">
    <citation type="journal article" date="2024" name="Cell">
        <title>ITPRIPL1 binds CD3epsilon to impede T cell activation and enable tumor immune evasion.</title>
        <authorList>
            <person name="Deng S."/>
            <person name="Zhang Y."/>
            <person name="Wang H."/>
            <person name="Liang W."/>
            <person name="Xie L."/>
            <person name="Li N."/>
            <person name="Fang Y."/>
            <person name="Wang Y."/>
            <person name="Liu J."/>
            <person name="Chi H."/>
            <person name="Sun Y."/>
            <person name="Ye R."/>
            <person name="Shan L."/>
            <person name="Shi J."/>
            <person name="Shen Z."/>
            <person name="Wang Y."/>
            <person name="Wang S."/>
            <person name="Brosseau J.P."/>
            <person name="Wang F."/>
            <person name="Liu G."/>
            <person name="Quan Y."/>
            <person name="Xu J."/>
        </authorList>
    </citation>
    <scope>FUNCTION</scope>
    <scope>TISSUE SPECIFICITY</scope>
    <scope>SUBCELLULAR LOCATION</scope>
</reference>
<gene>
    <name evidence="6" type="primary">ITPRIPL1</name>
    <name type="synonym">KIAA1754L</name>
</gene>
<feature type="signal peptide" evidence="1">
    <location>
        <begin position="1"/>
        <end position="24"/>
    </location>
</feature>
<feature type="chain" id="PRO_0000320566" description="Inositol 1,4,5-trisphosphate receptor-interacting protein-like 1">
    <location>
        <begin position="25"/>
        <end position="555"/>
    </location>
</feature>
<feature type="topological domain" description="Extracellular" evidence="1">
    <location>
        <begin position="25"/>
        <end position="103"/>
    </location>
</feature>
<feature type="transmembrane region" description="Helical" evidence="1">
    <location>
        <begin position="104"/>
        <end position="124"/>
    </location>
</feature>
<feature type="topological domain" description="Cytoplasmic" evidence="1">
    <location>
        <begin position="125"/>
        <end position="555"/>
    </location>
</feature>
<feature type="coiled-coil region" evidence="1">
    <location>
        <begin position="38"/>
        <end position="74"/>
    </location>
</feature>
<feature type="splice variant" id="VSP_054316" description="In isoform 3." evidence="5">
    <location>
        <begin position="1"/>
        <end position="8"/>
    </location>
</feature>
<feature type="splice variant" id="VSP_031666" description="In isoform 2." evidence="4">
    <original>MNV</original>
    <variation>MTTDSYSPTSP</variation>
    <location>
        <begin position="1"/>
        <end position="3"/>
    </location>
</feature>
<feature type="sequence variant" id="VAR_039209" description="In dbSNP:rs17853311." evidence="2">
    <original>G</original>
    <variation>R</variation>
    <location>
        <position position="280"/>
    </location>
</feature>
<feature type="sequence variant" id="VAR_039210" description="In dbSNP:rs35855657.">
    <original>S</original>
    <variation>C</variation>
    <location>
        <position position="428"/>
    </location>
</feature>
<feature type="sequence variant" id="VAR_039211" description="In dbSNP:rs2279105.">
    <original>T</original>
    <variation>M</variation>
    <location>
        <position position="463"/>
    </location>
</feature>
<dbReference type="EMBL" id="AC021188">
    <property type="status" value="NOT_ANNOTATED_CDS"/>
    <property type="molecule type" value="Genomic_DNA"/>
</dbReference>
<dbReference type="EMBL" id="BC034503">
    <property type="protein sequence ID" value="AAH34503.2"/>
    <property type="molecule type" value="mRNA"/>
</dbReference>
<dbReference type="EMBL" id="BC073153">
    <property type="protein sequence ID" value="AAH73153.1"/>
    <property type="molecule type" value="mRNA"/>
</dbReference>
<dbReference type="CCDS" id="CCDS33250.1">
    <molecule id="Q6GPH6-2"/>
</dbReference>
<dbReference type="CCDS" id="CCDS46360.1">
    <molecule id="Q6GPH6-1"/>
</dbReference>
<dbReference type="CCDS" id="CCDS54378.1">
    <molecule id="Q6GPH6-3"/>
</dbReference>
<dbReference type="RefSeq" id="NP_001008949.1">
    <molecule id="Q6GPH6-1"/>
    <property type="nucleotide sequence ID" value="NM_001008949.3"/>
</dbReference>
<dbReference type="RefSeq" id="NP_001156995.1">
    <molecule id="Q6GPH6-3"/>
    <property type="nucleotide sequence ID" value="NM_001163523.2"/>
</dbReference>
<dbReference type="RefSeq" id="NP_001156996.1">
    <molecule id="Q6GPH6-3"/>
    <property type="nucleotide sequence ID" value="NM_001163524.1"/>
</dbReference>
<dbReference type="RefSeq" id="NP_001311419.1">
    <molecule id="Q6GPH6-3"/>
    <property type="nucleotide sequence ID" value="NM_001324490.1"/>
</dbReference>
<dbReference type="RefSeq" id="NP_848590.3">
    <molecule id="Q6GPH6-2"/>
    <property type="nucleotide sequence ID" value="NM_178495.5"/>
</dbReference>
<dbReference type="RefSeq" id="XP_016858916.1">
    <molecule id="Q6GPH6-1"/>
    <property type="nucleotide sequence ID" value="XM_017003427.2"/>
</dbReference>
<dbReference type="BioGRID" id="127325">
    <property type="interactions" value="48"/>
</dbReference>
<dbReference type="FunCoup" id="Q6GPH6">
    <property type="interactions" value="282"/>
</dbReference>
<dbReference type="IntAct" id="Q6GPH6">
    <property type="interactions" value="36"/>
</dbReference>
<dbReference type="STRING" id="9606.ENSP00000355121"/>
<dbReference type="iPTMnet" id="Q6GPH6"/>
<dbReference type="PhosphoSitePlus" id="Q6GPH6"/>
<dbReference type="BioMuta" id="ITPRIPL1"/>
<dbReference type="DMDM" id="74736480"/>
<dbReference type="jPOST" id="Q6GPH6"/>
<dbReference type="MassIVE" id="Q6GPH6"/>
<dbReference type="PaxDb" id="9606-ENSP00000355121"/>
<dbReference type="PeptideAtlas" id="Q6GPH6"/>
<dbReference type="ProteomicsDB" id="25696"/>
<dbReference type="ProteomicsDB" id="66314">
    <molecule id="Q6GPH6-1"/>
</dbReference>
<dbReference type="ProteomicsDB" id="66315">
    <molecule id="Q6GPH6-2"/>
</dbReference>
<dbReference type="Pumba" id="Q6GPH6"/>
<dbReference type="Antibodypedia" id="3069">
    <property type="antibodies" value="98 antibodies from 18 providers"/>
</dbReference>
<dbReference type="DNASU" id="150771"/>
<dbReference type="Ensembl" id="ENST00000361124.5">
    <molecule id="Q6GPH6-2"/>
    <property type="protein sequence ID" value="ENSP00000355121.4"/>
    <property type="gene ID" value="ENSG00000198885.10"/>
</dbReference>
<dbReference type="Ensembl" id="ENST00000439118.3">
    <molecule id="Q6GPH6-1"/>
    <property type="protein sequence ID" value="ENSP00000389308.2"/>
    <property type="gene ID" value="ENSG00000198885.10"/>
</dbReference>
<dbReference type="Ensembl" id="ENST00000536814.1">
    <molecule id="Q6GPH6-3"/>
    <property type="protein sequence ID" value="ENSP00000439566.1"/>
    <property type="gene ID" value="ENSG00000198885.10"/>
</dbReference>
<dbReference type="GeneID" id="150771"/>
<dbReference type="KEGG" id="hsa:150771"/>
<dbReference type="MANE-Select" id="ENST00000439118.3">
    <property type="protein sequence ID" value="ENSP00000389308.2"/>
    <property type="RefSeq nucleotide sequence ID" value="NM_001008949.3"/>
    <property type="RefSeq protein sequence ID" value="NP_001008949.1"/>
</dbReference>
<dbReference type="UCSC" id="uc002svx.4">
    <molecule id="Q6GPH6-1"/>
    <property type="organism name" value="human"/>
</dbReference>
<dbReference type="AGR" id="HGNC:29371"/>
<dbReference type="CTD" id="150771"/>
<dbReference type="DisGeNET" id="150771"/>
<dbReference type="GeneCards" id="ITPRIPL1"/>
<dbReference type="HGNC" id="HGNC:29371">
    <property type="gene designation" value="ITPRIPL1"/>
</dbReference>
<dbReference type="HPA" id="ENSG00000198885">
    <property type="expression patterns" value="Tissue enhanced (testis)"/>
</dbReference>
<dbReference type="MalaCards" id="ITPRIPL1"/>
<dbReference type="MIM" id="620821">
    <property type="type" value="gene"/>
</dbReference>
<dbReference type="neXtProt" id="NX_Q6GPH6"/>
<dbReference type="OpenTargets" id="ENSG00000198885"/>
<dbReference type="PharmGKB" id="PA162392345"/>
<dbReference type="VEuPathDB" id="HostDB:ENSG00000198885"/>
<dbReference type="eggNOG" id="ENOG502RX8U">
    <property type="taxonomic scope" value="Eukaryota"/>
</dbReference>
<dbReference type="GeneTree" id="ENSGT01050000244827"/>
<dbReference type="HOGENOM" id="CLU_025485_2_0_1"/>
<dbReference type="InParanoid" id="Q6GPH6"/>
<dbReference type="OMA" id="TSVHWPE"/>
<dbReference type="OrthoDB" id="9034619at2759"/>
<dbReference type="PAN-GO" id="Q6GPH6">
    <property type="GO annotations" value="1 GO annotation based on evolutionary models"/>
</dbReference>
<dbReference type="PhylomeDB" id="Q6GPH6"/>
<dbReference type="TreeFam" id="TF332277"/>
<dbReference type="PathwayCommons" id="Q6GPH6"/>
<dbReference type="SignaLink" id="Q6GPH6"/>
<dbReference type="SIGNOR" id="Q6GPH6"/>
<dbReference type="BioGRID-ORCS" id="150771">
    <property type="hits" value="10 hits in 1147 CRISPR screens"/>
</dbReference>
<dbReference type="GenomeRNAi" id="150771"/>
<dbReference type="Pharos" id="Q6GPH6">
    <property type="development level" value="Tdark"/>
</dbReference>
<dbReference type="PRO" id="PR:Q6GPH6"/>
<dbReference type="Proteomes" id="UP000005640">
    <property type="component" value="Chromosome 2"/>
</dbReference>
<dbReference type="RNAct" id="Q6GPH6">
    <property type="molecule type" value="protein"/>
</dbReference>
<dbReference type="Bgee" id="ENSG00000198885">
    <property type="expression patterns" value="Expressed in sperm and 104 other cell types or tissues"/>
</dbReference>
<dbReference type="ExpressionAtlas" id="Q6GPH6">
    <property type="expression patterns" value="baseline and differential"/>
</dbReference>
<dbReference type="GO" id="GO:0016020">
    <property type="term" value="C:membrane"/>
    <property type="evidence" value="ECO:0007005"/>
    <property type="project" value="UniProtKB"/>
</dbReference>
<dbReference type="GO" id="GO:0005886">
    <property type="term" value="C:plasma membrane"/>
    <property type="evidence" value="ECO:0000314"/>
    <property type="project" value="UniProt"/>
</dbReference>
<dbReference type="GO" id="GO:0048018">
    <property type="term" value="F:receptor ligand activity"/>
    <property type="evidence" value="ECO:0000314"/>
    <property type="project" value="UniProt"/>
</dbReference>
<dbReference type="GO" id="GO:0070509">
    <property type="term" value="P:calcium ion import"/>
    <property type="evidence" value="ECO:0007669"/>
    <property type="project" value="Ensembl"/>
</dbReference>
<dbReference type="GO" id="GO:0050860">
    <property type="term" value="P:negative regulation of T cell receptor signaling pathway"/>
    <property type="evidence" value="ECO:0000314"/>
    <property type="project" value="UniProt"/>
</dbReference>
<dbReference type="GO" id="GO:0030217">
    <property type="term" value="P:T cell differentiation"/>
    <property type="evidence" value="ECO:0007669"/>
    <property type="project" value="Ensembl"/>
</dbReference>
<dbReference type="FunFam" id="1.10.1410.40:FF:000006">
    <property type="entry name" value="Inositol 1,4,5-trisphosphate receptor-interacting protein"/>
    <property type="match status" value="1"/>
</dbReference>
<dbReference type="Gene3D" id="1.10.1410.40">
    <property type="match status" value="1"/>
</dbReference>
<dbReference type="InterPro" id="IPR026250">
    <property type="entry name" value="ITPRIP-like"/>
</dbReference>
<dbReference type="InterPro" id="IPR046906">
    <property type="entry name" value="Mab-21_HhH/H2TH-like"/>
</dbReference>
<dbReference type="InterPro" id="IPR024810">
    <property type="entry name" value="MAB21L/cGLR"/>
</dbReference>
<dbReference type="PANTHER" id="PTHR10656">
    <property type="entry name" value="CELL FATE DETERMINING PROTEIN MAB21-RELATED"/>
    <property type="match status" value="1"/>
</dbReference>
<dbReference type="PANTHER" id="PTHR10656:SF40">
    <property type="entry name" value="INOSITOL 1,4,5-TRISPHOSPHATE RECEPTOR-INTERACTING PROTEIN-LIKE 1"/>
    <property type="match status" value="1"/>
</dbReference>
<dbReference type="Pfam" id="PF20266">
    <property type="entry name" value="Mab-21_C"/>
    <property type="match status" value="1"/>
</dbReference>
<dbReference type="PRINTS" id="PR02107">
    <property type="entry name" value="INOS145TPRIP"/>
</dbReference>
<dbReference type="SMART" id="SM01265">
    <property type="entry name" value="Mab-21"/>
    <property type="match status" value="1"/>
</dbReference>
<name>IPIL1_HUMAN</name>
<organism>
    <name type="scientific">Homo sapiens</name>
    <name type="common">Human</name>
    <dbReference type="NCBI Taxonomy" id="9606"/>
    <lineage>
        <taxon>Eukaryota</taxon>
        <taxon>Metazoa</taxon>
        <taxon>Chordata</taxon>
        <taxon>Craniata</taxon>
        <taxon>Vertebrata</taxon>
        <taxon>Euteleostomi</taxon>
        <taxon>Mammalia</taxon>
        <taxon>Eutheria</taxon>
        <taxon>Euarchontoglires</taxon>
        <taxon>Primates</taxon>
        <taxon>Haplorrhini</taxon>
        <taxon>Catarrhini</taxon>
        <taxon>Hominidae</taxon>
        <taxon>Homo</taxon>
    </lineage>
</organism>
<comment type="function">
    <text evidence="3">Functions as a ligand of CD3E, inhibiting TCR-CD3 complex signaling to regulate T cell activation. Induces stable CD3E-NCK1 binding, thereby preventing the CD3E-ZAP70 interaction and subsequently inhibiting the activation of the downstream ERK-NFkB signaling cascade and calcium influx.</text>
</comment>
<comment type="interaction">
    <interactant intactId="EBI-953819">
        <id>Q6GPH6</id>
    </interactant>
    <interactant intactId="EBI-347996">
        <id>O43765</id>
        <label>SGTA</label>
    </interactant>
    <organismsDiffer>false</organismsDiffer>
    <experiments>3</experiments>
</comment>
<comment type="interaction">
    <interactant intactId="EBI-953819">
        <id>Q6GPH6</id>
    </interactant>
    <interactant intactId="EBI-741480">
        <id>Q9UMX0</id>
        <label>UBQLN1</label>
    </interactant>
    <organismsDiffer>false</organismsDiffer>
    <experiments>3</experiments>
</comment>
<comment type="interaction">
    <interactant intactId="EBI-12337095">
        <id>Q6GPH6-2</id>
    </interactant>
    <interactant intactId="EBI-347996">
        <id>O43765</id>
        <label>SGTA</label>
    </interactant>
    <organismsDiffer>false</organismsDiffer>
    <experiments>3</experiments>
</comment>
<comment type="interaction">
    <interactant intactId="EBI-12337095">
        <id>Q6GPH6-2</id>
    </interactant>
    <interactant intactId="EBI-744081">
        <id>Q96EQ0</id>
        <label>SGTB</label>
    </interactant>
    <organismsDiffer>false</organismsDiffer>
    <experiments>3</experiments>
</comment>
<comment type="interaction">
    <interactant intactId="EBI-12337095">
        <id>Q6GPH6-2</id>
    </interactant>
    <interactant intactId="EBI-355744">
        <id>Q12933</id>
        <label>TRAF2</label>
    </interactant>
    <organismsDiffer>false</organismsDiffer>
    <experiments>3</experiments>
</comment>
<comment type="interaction">
    <interactant intactId="EBI-12337095">
        <id>Q6GPH6-2</id>
    </interactant>
    <interactant intactId="EBI-947187">
        <id>Q9UHD9</id>
        <label>UBQLN2</label>
    </interactant>
    <organismsDiffer>false</organismsDiffer>
    <experiments>3</experiments>
</comment>
<comment type="interaction">
    <interactant intactId="EBI-12337095">
        <id>Q6GPH6-2</id>
    </interactant>
    <interactant intactId="EBI-17234977">
        <id>A0A1U9X8X8</id>
    </interactant>
    <organismsDiffer>false</organismsDiffer>
    <experiments>3</experiments>
</comment>
<comment type="subcellular location">
    <subcellularLocation>
        <location evidence="3">Cell membrane</location>
        <topology evidence="1">Single-pass type I membrane protein</topology>
    </subcellularLocation>
</comment>
<comment type="alternative products">
    <event type="alternative splicing"/>
    <isoform>
        <id>Q6GPH6-1</id>
        <name>1</name>
        <sequence type="displayed"/>
    </isoform>
    <isoform>
        <id>Q6GPH6-2</id>
        <name>2</name>
        <sequence type="described" ref="VSP_031666"/>
    </isoform>
    <isoform>
        <id>Q6GPH6-3</id>
        <name>3</name>
        <sequence type="described" ref="VSP_054316"/>
    </isoform>
</comment>
<comment type="tissue specificity">
    <text evidence="3">Expressed in testis and tumoral cells.</text>
</comment>
<comment type="similarity">
    <text evidence="5">Belongs to the ITPRIP family.</text>
</comment>
<proteinExistence type="evidence at protein level"/>
<keyword id="KW-0025">Alternative splicing</keyword>
<keyword id="KW-1003">Cell membrane</keyword>
<keyword id="KW-0175">Coiled coil</keyword>
<keyword id="KW-0472">Membrane</keyword>
<keyword id="KW-1267">Proteomics identification</keyword>
<keyword id="KW-1185">Reference proteome</keyword>
<keyword id="KW-0732">Signal</keyword>
<keyword id="KW-0812">Transmembrane</keyword>
<keyword id="KW-1133">Transmembrane helix</keyword>
<evidence type="ECO:0000255" key="1"/>
<evidence type="ECO:0000269" key="2">
    <source>
    </source>
</evidence>
<evidence type="ECO:0000269" key="3">
    <source>
    </source>
</evidence>
<evidence type="ECO:0000303" key="4">
    <source>
    </source>
</evidence>
<evidence type="ECO:0000305" key="5"/>
<evidence type="ECO:0000312" key="6">
    <source>
        <dbReference type="HGNC" id="HGNC:29371"/>
    </source>
</evidence>